<keyword id="KW-0193">Cuticle</keyword>
<keyword id="KW-0903">Direct protein sequencing</keyword>
<keyword id="KW-1185">Reference proteome</keyword>
<keyword id="KW-0732">Signal</keyword>
<organism>
    <name type="scientific">Bombyx mori</name>
    <name type="common">Silk moth</name>
    <dbReference type="NCBI Taxonomy" id="7091"/>
    <lineage>
        <taxon>Eukaryota</taxon>
        <taxon>Metazoa</taxon>
        <taxon>Ecdysozoa</taxon>
        <taxon>Arthropoda</taxon>
        <taxon>Hexapoda</taxon>
        <taxon>Insecta</taxon>
        <taxon>Pterygota</taxon>
        <taxon>Neoptera</taxon>
        <taxon>Endopterygota</taxon>
        <taxon>Lepidoptera</taxon>
        <taxon>Glossata</taxon>
        <taxon>Ditrysia</taxon>
        <taxon>Bombycoidea</taxon>
        <taxon>Bombycidae</taxon>
        <taxon>Bombycinae</taxon>
        <taxon>Bombyx</taxon>
    </lineage>
</organism>
<comment type="function">
    <text>Major cuticle protein of the integuments. May interact with both chitin and epidermal cells to form stable cuticular structures.</text>
</comment>
<comment type="developmental stage">
    <text>Exists in integuments throughout the larval stages and disappears at larval-pupal ecdysis. Present in lower amount adult cuticle after eclosion.</text>
</comment>
<comment type="induction">
    <text>By juvenile hormone.</text>
</comment>
<comment type="sequence caution" evidence="5">
    <conflict type="erroneous gene model prediction">
        <sequence resource="EMBL-CDS" id="CAA52369"/>
    </conflict>
</comment>
<proteinExistence type="evidence at protein level"/>
<dbReference type="EMBL" id="X74320">
    <property type="protein sequence ID" value="CAA52368.2"/>
    <property type="molecule type" value="mRNA"/>
</dbReference>
<dbReference type="EMBL" id="X74321">
    <property type="protein sequence ID" value="CAA52369.1"/>
    <property type="status" value="ALT_SEQ"/>
    <property type="molecule type" value="Genomic_DNA"/>
</dbReference>
<dbReference type="PIR" id="S45302">
    <property type="entry name" value="S45302"/>
</dbReference>
<dbReference type="RefSeq" id="NP_001037490.1">
    <property type="nucleotide sequence ID" value="NM_001044025.1"/>
</dbReference>
<dbReference type="FunCoup" id="Q08738">
    <property type="interactions" value="15"/>
</dbReference>
<dbReference type="STRING" id="7091.Q08738"/>
<dbReference type="PaxDb" id="7091-BGIBMGA000329-TA"/>
<dbReference type="EnsemblMetazoa" id="NM_001044025.1">
    <property type="protein sequence ID" value="NP_001037490.1"/>
    <property type="gene ID" value="GeneID_693048"/>
</dbReference>
<dbReference type="GeneID" id="693048"/>
<dbReference type="KEGG" id="bmor:693048"/>
<dbReference type="CTD" id="693048"/>
<dbReference type="eggNOG" id="ENOG502S88E">
    <property type="taxonomic scope" value="Eukaryota"/>
</dbReference>
<dbReference type="HOGENOM" id="CLU_811906_0_0_1"/>
<dbReference type="InParanoid" id="Q08738"/>
<dbReference type="OrthoDB" id="648721at7088"/>
<dbReference type="Proteomes" id="UP000005204">
    <property type="component" value="Unassembled WGS sequence"/>
</dbReference>
<dbReference type="GO" id="GO:0062129">
    <property type="term" value="C:chitin-based extracellular matrix"/>
    <property type="evidence" value="ECO:0007669"/>
    <property type="project" value="TreeGrafter"/>
</dbReference>
<dbReference type="GO" id="GO:0008010">
    <property type="term" value="F:structural constituent of chitin-based larval cuticle"/>
    <property type="evidence" value="ECO:0007669"/>
    <property type="project" value="TreeGrafter"/>
</dbReference>
<dbReference type="InterPro" id="IPR031311">
    <property type="entry name" value="CHIT_BIND_RR_consensus"/>
</dbReference>
<dbReference type="InterPro" id="IPR050468">
    <property type="entry name" value="Cuticle_Struct_Prot"/>
</dbReference>
<dbReference type="InterPro" id="IPR000618">
    <property type="entry name" value="Insect_cuticle"/>
</dbReference>
<dbReference type="PANTHER" id="PTHR10380">
    <property type="entry name" value="CUTICLE PROTEIN"/>
    <property type="match status" value="1"/>
</dbReference>
<dbReference type="PANTHER" id="PTHR10380:SF200">
    <property type="entry name" value="CUTICULAR PROTEIN 49AB-RELATED"/>
    <property type="match status" value="1"/>
</dbReference>
<dbReference type="Pfam" id="PF00379">
    <property type="entry name" value="Chitin_bind_4"/>
    <property type="match status" value="1"/>
</dbReference>
<dbReference type="PRINTS" id="PR00947">
    <property type="entry name" value="CUTICLE"/>
</dbReference>
<dbReference type="PROSITE" id="PS00233">
    <property type="entry name" value="CHIT_BIND_RR_1"/>
    <property type="match status" value="1"/>
</dbReference>
<dbReference type="PROSITE" id="PS51155">
    <property type="entry name" value="CHIT_BIND_RR_2"/>
    <property type="match status" value="1"/>
</dbReference>
<sequence length="239" mass="25690">MRVFLAICLSLTVALAAETGKYTPFQYNRVYSTVSPFVYKPGRYVADPGRYDPSRDNSGRYIPDNSGAYNGDRGDRGAAGGFYTGSGTAGGPGGAYVGTKEDLSKYLGDAYKGSSIVPLPVVKPTIPVPVTPTYVASKVVTPTYVASKVVPPSGAGYDYKYGIIRYDNDVAPEGYHYLYETENKILAEEAGKVENIGTENEGIKVKGFYEYVGPDGVTYRVDYTADENGFVADGAHIPK</sequence>
<feature type="signal peptide" evidence="4">
    <location>
        <begin position="1"/>
        <end position="16"/>
    </location>
</feature>
<feature type="chain" id="PRO_0000006406" description="Larval cuticle protein LCP-30">
    <location>
        <begin position="17"/>
        <end position="239"/>
    </location>
</feature>
<feature type="domain" description="Chitin-binding type R&amp;R" evidence="2">
    <location>
        <begin position="172"/>
        <end position="239"/>
    </location>
</feature>
<feature type="region of interest" description="Disordered" evidence="3">
    <location>
        <begin position="48"/>
        <end position="73"/>
    </location>
</feature>
<feature type="short sequence motif" description="Cell attachment site" evidence="1">
    <location>
        <begin position="73"/>
        <end position="75"/>
    </location>
</feature>
<feature type="compositionally biased region" description="Basic and acidic residues" evidence="3">
    <location>
        <begin position="49"/>
        <end position="58"/>
    </location>
</feature>
<protein>
    <recommendedName>
        <fullName>Larval cuticle protein LCP-30</fullName>
    </recommendedName>
</protein>
<gene>
    <name type="primary">LCP30</name>
</gene>
<reference key="1">
    <citation type="journal article" date="1994" name="Biochim. Biophys. Acta">
        <title>Structure and developmental expression of a larval cuticle protein gene of the silkworm, Bombyx mori.</title>
        <authorList>
            <person name="Nakato H."/>
            <person name="Shofuda K."/>
            <person name="Izumi S."/>
            <person name="Tomino S."/>
        </authorList>
    </citation>
    <scope>NUCLEOTIDE SEQUENCE [GENOMIC DNA / MRNA]</scope>
    <scope>PROTEIN SEQUENCE OF 17-26</scope>
    <source>
        <strain>Tokai X Asahi</strain>
        <tissue>Larval epidermis</tissue>
        <tissue>Larval fat body</tissue>
    </source>
</reference>
<reference key="2">
    <citation type="submission" date="1999-12" db="EMBL/GenBank/DDBJ databases">
        <authorList>
            <person name="Togawa T."/>
        </authorList>
    </citation>
    <scope>SEQUENCE REVISION TO 130 AND C-TERMINUS</scope>
</reference>
<evidence type="ECO:0000255" key="1"/>
<evidence type="ECO:0000255" key="2">
    <source>
        <dbReference type="PROSITE-ProRule" id="PRU00497"/>
    </source>
</evidence>
<evidence type="ECO:0000256" key="3">
    <source>
        <dbReference type="SAM" id="MobiDB-lite"/>
    </source>
</evidence>
<evidence type="ECO:0000269" key="4">
    <source>
    </source>
</evidence>
<evidence type="ECO:0000305" key="5"/>
<accession>Q08738</accession>
<name>CU30_BOMMO</name>